<reference evidence="7" key="1">
    <citation type="journal article" date="2007" name="J. Proteome Res.">
        <title>De novo mass spectrometry sequencing and characterization of species-specific peptides from nucleoside diphosphate kinase B for the classification of commercial fish species belonging to the family Merlucciidae.</title>
        <authorList>
            <person name="Carrera M."/>
            <person name="Canas B."/>
            <person name="Pineiro C."/>
            <person name="Vazquez J."/>
            <person name="Gallardo J.M."/>
        </authorList>
    </citation>
    <scope>PROTEIN SEQUENCE</scope>
    <source>
        <tissue evidence="5">White muscle</tissue>
    </source>
</reference>
<feature type="chain" id="PRO_0000306194" description="Nucleoside diphosphate kinase B">
    <location>
        <begin position="1" status="less than"/>
        <end position="126"/>
    </location>
</feature>
<feature type="active site" description="Pros-phosphohistidine intermediate" evidence="1 4">
    <location>
        <position position="92"/>
    </location>
</feature>
<feature type="binding site" evidence="1">
    <location>
        <position position="6"/>
    </location>
    <ligand>
        <name>ATP</name>
        <dbReference type="ChEBI" id="CHEBI:30616"/>
    </ligand>
</feature>
<feature type="binding site" evidence="1">
    <location>
        <position position="37"/>
    </location>
    <ligand>
        <name>ATP</name>
        <dbReference type="ChEBI" id="CHEBI:30616"/>
    </ligand>
</feature>
<feature type="binding site" evidence="1">
    <location>
        <position position="68"/>
    </location>
    <ligand>
        <name>ATP</name>
        <dbReference type="ChEBI" id="CHEBI:30616"/>
    </ligand>
</feature>
<feature type="binding site" evidence="1">
    <location>
        <position position="79"/>
    </location>
    <ligand>
        <name>ATP</name>
        <dbReference type="ChEBI" id="CHEBI:30616"/>
    </ligand>
</feature>
<feature type="binding site" evidence="1">
    <location>
        <position position="89"/>
    </location>
    <ligand>
        <name>ATP</name>
        <dbReference type="ChEBI" id="CHEBI:30616"/>
    </ligand>
</feature>
<feature type="non-consecutive residues" evidence="6">
    <location>
        <begin position="20"/>
        <end position="21"/>
    </location>
</feature>
<feature type="non-consecutive residues" evidence="6">
    <location>
        <begin position="24"/>
        <end position="25"/>
    </location>
</feature>
<feature type="non-consecutive residues" evidence="6">
    <location>
        <begin position="62"/>
        <end position="63"/>
    </location>
</feature>
<feature type="non-terminal residue" evidence="6">
    <location>
        <position position="1"/>
    </location>
</feature>
<sequence>TFVAIKPDGVQRGLCGEVMKFIQPMKQHYLDLKDMPFYAGLCKYMSSGPVFAMVWEGEGIVKMMLGETNPADSKPGSIRGDFCINIGRNIIHGSDTVENAKMEVALWFKPEEFVTYTEKAKAWVYE</sequence>
<comment type="function">
    <text evidence="1">Major role in the synthesis of nucleoside triphosphates other than ATP.</text>
</comment>
<comment type="catalytic activity">
    <reaction evidence="1 4">
        <text>a 2'-deoxyribonucleoside 5'-diphosphate + ATP = a 2'-deoxyribonucleoside 5'-triphosphate + ADP</text>
        <dbReference type="Rhea" id="RHEA:44640"/>
        <dbReference type="ChEBI" id="CHEBI:30616"/>
        <dbReference type="ChEBI" id="CHEBI:61560"/>
        <dbReference type="ChEBI" id="CHEBI:73316"/>
        <dbReference type="ChEBI" id="CHEBI:456216"/>
        <dbReference type="EC" id="2.7.4.6"/>
    </reaction>
</comment>
<comment type="catalytic activity">
    <reaction evidence="1 4">
        <text>a ribonucleoside 5'-diphosphate + ATP = a ribonucleoside 5'-triphosphate + ADP</text>
        <dbReference type="Rhea" id="RHEA:18113"/>
        <dbReference type="ChEBI" id="CHEBI:30616"/>
        <dbReference type="ChEBI" id="CHEBI:57930"/>
        <dbReference type="ChEBI" id="CHEBI:61557"/>
        <dbReference type="ChEBI" id="CHEBI:456216"/>
        <dbReference type="EC" id="2.7.4.6"/>
    </reaction>
</comment>
<comment type="cofactor">
    <cofactor evidence="1">
        <name>Mg(2+)</name>
        <dbReference type="ChEBI" id="CHEBI:18420"/>
    </cofactor>
</comment>
<comment type="subcellular location">
    <subcellularLocation>
        <location evidence="2">Cytoplasm</location>
    </subcellularLocation>
    <subcellularLocation>
        <location evidence="2">Nucleus</location>
    </subcellularLocation>
    <subcellularLocation>
        <location evidence="2">Cell projection</location>
        <location evidence="2">Lamellipodium</location>
    </subcellularLocation>
    <subcellularLocation>
        <location evidence="2">Cell projection</location>
        <location evidence="2">Ruffle</location>
    </subcellularLocation>
</comment>
<comment type="similarity">
    <text evidence="3">Belongs to the NDK family.</text>
</comment>
<keyword id="KW-0067">ATP-binding</keyword>
<keyword id="KW-0131">Cell cycle</keyword>
<keyword id="KW-0966">Cell projection</keyword>
<keyword id="KW-0963">Cytoplasm</keyword>
<keyword id="KW-0903">Direct protein sequencing</keyword>
<keyword id="KW-0418">Kinase</keyword>
<keyword id="KW-0460">Magnesium</keyword>
<keyword id="KW-0479">Metal-binding</keyword>
<keyword id="KW-0546">Nucleotide metabolism</keyword>
<keyword id="KW-0547">Nucleotide-binding</keyword>
<keyword id="KW-0539">Nucleus</keyword>
<keyword id="KW-0597">Phosphoprotein</keyword>
<keyword id="KW-0808">Transferase</keyword>
<evidence type="ECO:0000250" key="1">
    <source>
        <dbReference type="UniProtKB" id="P15531"/>
    </source>
</evidence>
<evidence type="ECO:0000250" key="2">
    <source>
        <dbReference type="UniProtKB" id="P22392"/>
    </source>
</evidence>
<evidence type="ECO:0000255" key="3"/>
<evidence type="ECO:0000255" key="4">
    <source>
        <dbReference type="PROSITE-ProRule" id="PRU10030"/>
    </source>
</evidence>
<evidence type="ECO:0000269" key="5">
    <source>
    </source>
</evidence>
<evidence type="ECO:0000303" key="6">
    <source>
    </source>
</evidence>
<evidence type="ECO:0000305" key="7"/>
<name>NDKB_MERSE</name>
<accession>P85282</accession>
<organism>
    <name type="scientific">Merluccius senegalensis</name>
    <name type="common">Senegalese hake</name>
    <dbReference type="NCBI Taxonomy" id="89953"/>
    <lineage>
        <taxon>Eukaryota</taxon>
        <taxon>Metazoa</taxon>
        <taxon>Chordata</taxon>
        <taxon>Craniata</taxon>
        <taxon>Vertebrata</taxon>
        <taxon>Euteleostomi</taxon>
        <taxon>Actinopterygii</taxon>
        <taxon>Neopterygii</taxon>
        <taxon>Teleostei</taxon>
        <taxon>Neoteleostei</taxon>
        <taxon>Acanthomorphata</taxon>
        <taxon>Zeiogadaria</taxon>
        <taxon>Gadariae</taxon>
        <taxon>Gadiformes</taxon>
        <taxon>Gadoidei</taxon>
        <taxon>Merlucciidae</taxon>
        <taxon>Merluccius</taxon>
    </lineage>
</organism>
<gene>
    <name type="primary">nme2</name>
</gene>
<protein>
    <recommendedName>
        <fullName>Nucleoside diphosphate kinase B</fullName>
        <shortName>NDK B</shortName>
        <shortName>NDP kinase B</shortName>
        <ecNumber>2.7.4.6</ecNumber>
    </recommendedName>
</protein>
<proteinExistence type="evidence at protein level"/>
<dbReference type="EC" id="2.7.4.6"/>
<dbReference type="SMR" id="P85282"/>
<dbReference type="GO" id="GO:0005737">
    <property type="term" value="C:cytoplasm"/>
    <property type="evidence" value="ECO:0007669"/>
    <property type="project" value="UniProtKB-SubCell"/>
</dbReference>
<dbReference type="GO" id="GO:0030027">
    <property type="term" value="C:lamellipodium"/>
    <property type="evidence" value="ECO:0007669"/>
    <property type="project" value="UniProtKB-SubCell"/>
</dbReference>
<dbReference type="GO" id="GO:0005634">
    <property type="term" value="C:nucleus"/>
    <property type="evidence" value="ECO:0007669"/>
    <property type="project" value="UniProtKB-SubCell"/>
</dbReference>
<dbReference type="GO" id="GO:0001726">
    <property type="term" value="C:ruffle"/>
    <property type="evidence" value="ECO:0007669"/>
    <property type="project" value="UniProtKB-SubCell"/>
</dbReference>
<dbReference type="GO" id="GO:0005524">
    <property type="term" value="F:ATP binding"/>
    <property type="evidence" value="ECO:0007669"/>
    <property type="project" value="UniProtKB-KW"/>
</dbReference>
<dbReference type="GO" id="GO:0046872">
    <property type="term" value="F:metal ion binding"/>
    <property type="evidence" value="ECO:0007669"/>
    <property type="project" value="UniProtKB-KW"/>
</dbReference>
<dbReference type="GO" id="GO:0004550">
    <property type="term" value="F:nucleoside diphosphate kinase activity"/>
    <property type="evidence" value="ECO:0007669"/>
    <property type="project" value="UniProtKB-EC"/>
</dbReference>
<dbReference type="GO" id="GO:0006241">
    <property type="term" value="P:CTP biosynthetic process"/>
    <property type="evidence" value="ECO:0007669"/>
    <property type="project" value="InterPro"/>
</dbReference>
<dbReference type="GO" id="GO:0006183">
    <property type="term" value="P:GTP biosynthetic process"/>
    <property type="evidence" value="ECO:0007669"/>
    <property type="project" value="InterPro"/>
</dbReference>
<dbReference type="GO" id="GO:0006228">
    <property type="term" value="P:UTP biosynthetic process"/>
    <property type="evidence" value="ECO:0007669"/>
    <property type="project" value="InterPro"/>
</dbReference>
<dbReference type="CDD" id="cd04413">
    <property type="entry name" value="NDPk_I"/>
    <property type="match status" value="1"/>
</dbReference>
<dbReference type="FunFam" id="3.30.70.141:FF:000039">
    <property type="entry name" value="Nucleoside diphosphate kinase B"/>
    <property type="match status" value="1"/>
</dbReference>
<dbReference type="Gene3D" id="3.30.70.141">
    <property type="entry name" value="Nucleoside diphosphate kinase-like domain"/>
    <property type="match status" value="1"/>
</dbReference>
<dbReference type="InterPro" id="IPR034907">
    <property type="entry name" value="NDK-like_dom"/>
</dbReference>
<dbReference type="InterPro" id="IPR036850">
    <property type="entry name" value="NDK-like_dom_sf"/>
</dbReference>
<dbReference type="InterPro" id="IPR001564">
    <property type="entry name" value="Nucleoside_diP_kinase"/>
</dbReference>
<dbReference type="PANTHER" id="PTHR11349">
    <property type="entry name" value="NUCLEOSIDE DIPHOSPHATE KINASE"/>
    <property type="match status" value="1"/>
</dbReference>
<dbReference type="Pfam" id="PF00334">
    <property type="entry name" value="NDK"/>
    <property type="match status" value="1"/>
</dbReference>
<dbReference type="PRINTS" id="PR01243">
    <property type="entry name" value="NUCDPKINASE"/>
</dbReference>
<dbReference type="SMART" id="SM00562">
    <property type="entry name" value="NDK"/>
    <property type="match status" value="1"/>
</dbReference>
<dbReference type="SUPFAM" id="SSF54919">
    <property type="entry name" value="Nucleoside diphosphate kinase, NDK"/>
    <property type="match status" value="1"/>
</dbReference>
<dbReference type="PROSITE" id="PS51374">
    <property type="entry name" value="NDPK_LIKE"/>
    <property type="match status" value="1"/>
</dbReference>